<accession>B1W310</accession>
<dbReference type="EC" id="6.3.1.19" evidence="1"/>
<dbReference type="EMBL" id="AP009493">
    <property type="protein sequence ID" value="BAG22692.1"/>
    <property type="molecule type" value="Genomic_DNA"/>
</dbReference>
<dbReference type="RefSeq" id="WP_003970171.1">
    <property type="nucleotide sequence ID" value="NC_010572.1"/>
</dbReference>
<dbReference type="SMR" id="B1W310"/>
<dbReference type="MEROPS" id="U72.001"/>
<dbReference type="KEGG" id="sgr:SGR_5863"/>
<dbReference type="eggNOG" id="COG0638">
    <property type="taxonomic scope" value="Bacteria"/>
</dbReference>
<dbReference type="HOGENOM" id="CLU_040524_0_1_11"/>
<dbReference type="UniPathway" id="UPA00997"/>
<dbReference type="UniPathway" id="UPA00998"/>
<dbReference type="Proteomes" id="UP000001685">
    <property type="component" value="Chromosome"/>
</dbReference>
<dbReference type="GO" id="GO:0005524">
    <property type="term" value="F:ATP binding"/>
    <property type="evidence" value="ECO:0007669"/>
    <property type="project" value="UniProtKB-UniRule"/>
</dbReference>
<dbReference type="GO" id="GO:0016879">
    <property type="term" value="F:ligase activity, forming carbon-nitrogen bonds"/>
    <property type="evidence" value="ECO:0007669"/>
    <property type="project" value="InterPro"/>
</dbReference>
<dbReference type="GO" id="GO:0000287">
    <property type="term" value="F:magnesium ion binding"/>
    <property type="evidence" value="ECO:0007669"/>
    <property type="project" value="UniProtKB-UniRule"/>
</dbReference>
<dbReference type="GO" id="GO:0019787">
    <property type="term" value="F:ubiquitin-like protein transferase activity"/>
    <property type="evidence" value="ECO:0007669"/>
    <property type="project" value="UniProtKB-UniRule"/>
</dbReference>
<dbReference type="GO" id="GO:0019941">
    <property type="term" value="P:modification-dependent protein catabolic process"/>
    <property type="evidence" value="ECO:0007669"/>
    <property type="project" value="UniProtKB-UniRule"/>
</dbReference>
<dbReference type="GO" id="GO:0010498">
    <property type="term" value="P:proteasomal protein catabolic process"/>
    <property type="evidence" value="ECO:0007669"/>
    <property type="project" value="UniProtKB-UniRule"/>
</dbReference>
<dbReference type="GO" id="GO:0070490">
    <property type="term" value="P:protein pupylation"/>
    <property type="evidence" value="ECO:0007669"/>
    <property type="project" value="UniProtKB-UniRule"/>
</dbReference>
<dbReference type="HAMAP" id="MF_02111">
    <property type="entry name" value="Pup_ligase"/>
    <property type="match status" value="1"/>
</dbReference>
<dbReference type="InterPro" id="IPR022279">
    <property type="entry name" value="Pup_ligase"/>
</dbReference>
<dbReference type="InterPro" id="IPR004347">
    <property type="entry name" value="Pup_ligase/deamidase"/>
</dbReference>
<dbReference type="NCBIfam" id="TIGR03686">
    <property type="entry name" value="pupylate_PafA"/>
    <property type="match status" value="1"/>
</dbReference>
<dbReference type="PANTHER" id="PTHR42307">
    <property type="entry name" value="PUP DEAMIDASE/DEPUPYLASE"/>
    <property type="match status" value="1"/>
</dbReference>
<dbReference type="PANTHER" id="PTHR42307:SF3">
    <property type="entry name" value="PUP--PROTEIN LIGASE"/>
    <property type="match status" value="1"/>
</dbReference>
<dbReference type="Pfam" id="PF03136">
    <property type="entry name" value="Pup_ligase"/>
    <property type="match status" value="1"/>
</dbReference>
<dbReference type="PIRSF" id="PIRSF018077">
    <property type="entry name" value="UCP018077"/>
    <property type="match status" value="1"/>
</dbReference>
<proteinExistence type="inferred from homology"/>
<keyword id="KW-0067">ATP-binding</keyword>
<keyword id="KW-0436">Ligase</keyword>
<keyword id="KW-0460">Magnesium</keyword>
<keyword id="KW-0479">Metal-binding</keyword>
<keyword id="KW-0547">Nucleotide-binding</keyword>
<keyword id="KW-0833">Ubl conjugation pathway</keyword>
<protein>
    <recommendedName>
        <fullName evidence="1">Pup--protein ligase</fullName>
        <ecNumber evidence="1">6.3.1.19</ecNumber>
    </recommendedName>
    <alternativeName>
        <fullName evidence="1">Proteasome accessory factor A</fullName>
    </alternativeName>
    <alternativeName>
        <fullName evidence="1">Pup-conjugating enzyme</fullName>
    </alternativeName>
</protein>
<comment type="function">
    <text evidence="1">Catalyzes the covalent attachment of the prokaryotic ubiquitin-like protein modifier Pup to the proteasomal substrate proteins, thereby targeting them for proteasomal degradation. This tagging system is termed pupylation. The ligation reaction involves the side-chain carboxylate of the C-terminal glutamate of Pup and the side-chain amino group of a substrate lysine.</text>
</comment>
<comment type="catalytic activity">
    <reaction evidence="1">
        <text>ATP + [prokaryotic ubiquitin-like protein]-L-glutamate + [protein]-L-lysine = ADP + phosphate + N(6)-([prokaryotic ubiquitin-like protein]-gamma-L-glutamyl)-[protein]-L-lysine.</text>
        <dbReference type="EC" id="6.3.1.19"/>
    </reaction>
</comment>
<comment type="pathway">
    <text evidence="1">Protein degradation; proteasomal Pup-dependent pathway.</text>
</comment>
<comment type="pathway">
    <text evidence="1">Protein modification; protein pupylation.</text>
</comment>
<comment type="miscellaneous">
    <text evidence="1">The reaction mechanism probably proceeds via the activation of Pup by phosphorylation of its C-terminal glutamate, which is then subject to nucleophilic attack by the substrate lysine, resulting in an isopeptide bond and the release of phosphate as a good leaving group.</text>
</comment>
<comment type="similarity">
    <text evidence="1">Belongs to the Pup ligase/Pup deamidase family. Pup-conjugating enzyme subfamily.</text>
</comment>
<reference key="1">
    <citation type="journal article" date="2008" name="J. Bacteriol.">
        <title>Genome sequence of the streptomycin-producing microorganism Streptomyces griseus IFO 13350.</title>
        <authorList>
            <person name="Ohnishi Y."/>
            <person name="Ishikawa J."/>
            <person name="Hara H."/>
            <person name="Suzuki H."/>
            <person name="Ikenoya M."/>
            <person name="Ikeda H."/>
            <person name="Yamashita A."/>
            <person name="Hattori M."/>
            <person name="Horinouchi S."/>
        </authorList>
    </citation>
    <scope>NUCLEOTIDE SEQUENCE [LARGE SCALE GENOMIC DNA]</scope>
    <source>
        <strain>JCM 4626 / CBS 651.72 / NBRC 13350 / KCC S-0626 / ISP 5235</strain>
    </source>
</reference>
<organism>
    <name type="scientific">Streptomyces griseus subsp. griseus (strain JCM 4626 / CBS 651.72 / NBRC 13350 / KCC S-0626 / ISP 5235)</name>
    <dbReference type="NCBI Taxonomy" id="455632"/>
    <lineage>
        <taxon>Bacteria</taxon>
        <taxon>Bacillati</taxon>
        <taxon>Actinomycetota</taxon>
        <taxon>Actinomycetes</taxon>
        <taxon>Kitasatosporales</taxon>
        <taxon>Streptomycetaceae</taxon>
        <taxon>Streptomyces</taxon>
    </lineage>
</organism>
<feature type="chain" id="PRO_0000395957" description="Pup--protein ligase">
    <location>
        <begin position="1"/>
        <end position="453"/>
    </location>
</feature>
<feature type="active site" description="Proton acceptor" evidence="1">
    <location>
        <position position="57"/>
    </location>
</feature>
<feature type="binding site" evidence="1">
    <location>
        <position position="9"/>
    </location>
    <ligand>
        <name>Mg(2+)</name>
        <dbReference type="ChEBI" id="CHEBI:18420"/>
    </ligand>
</feature>
<feature type="binding site" evidence="1">
    <location>
        <position position="53"/>
    </location>
    <ligand>
        <name>ATP</name>
        <dbReference type="ChEBI" id="CHEBI:30616"/>
    </ligand>
</feature>
<feature type="binding site" evidence="1">
    <location>
        <position position="55"/>
    </location>
    <ligand>
        <name>Mg(2+)</name>
        <dbReference type="ChEBI" id="CHEBI:18420"/>
    </ligand>
</feature>
<feature type="binding site" evidence="1">
    <location>
        <position position="63"/>
    </location>
    <ligand>
        <name>Mg(2+)</name>
        <dbReference type="ChEBI" id="CHEBI:18420"/>
    </ligand>
</feature>
<feature type="binding site" evidence="1">
    <location>
        <position position="66"/>
    </location>
    <ligand>
        <name>ATP</name>
        <dbReference type="ChEBI" id="CHEBI:30616"/>
    </ligand>
</feature>
<feature type="binding site" evidence="1">
    <location>
        <position position="420"/>
    </location>
    <ligand>
        <name>ATP</name>
        <dbReference type="ChEBI" id="CHEBI:30616"/>
    </ligand>
</feature>
<evidence type="ECO:0000255" key="1">
    <source>
        <dbReference type="HAMAP-Rule" id="MF_02111"/>
    </source>
</evidence>
<name>PAFA_STRGG</name>
<sequence length="453" mass="52144">MDRRIFGLENEYGVTCTFRGQRRLSPDEVARYLFRRVVSWGRSSNVFLRNGARLYLDVGSHPEYATPECDNVTELVTHDKAGERILEGLLVDAERRLHEEGIAGDVYLFKNNTDSAGNSYGCHENYLVARHGEFSRLADILIPFLVTRQLICGAGKVLQTPRGAVYCVSQRAEHIWEGVSSATTRSRPIINTRDEPHADAERYRRLHVIVGDSNMSETTMLLKVGATDLVLRMIEAGTVMRDLTLENPIRAIREVSHDLTGQRKVRLASGREASAIEVQREYYEKAVDFVERRGIRTGTVDQVLELWGRTLDAVEAQDLDRIDTEIDWVMKYKLIERYRAKHNMTMSNPRVAQIDLAYHDIHRRRGLFYLLERKGQTARICNDLKIFEGKSVPPQTTRARLRGDFIRRAQEQRRDFTVDWVHLKLNDQAQRTVLCKDPFRSVDERVEKLIAGM</sequence>
<gene>
    <name evidence="1" type="primary">pafA</name>
    <name type="ordered locus">SGR_5863</name>
</gene>